<dbReference type="EMBL" id="CU459141">
    <property type="protein sequence ID" value="CAM87791.1"/>
    <property type="molecule type" value="Genomic_DNA"/>
</dbReference>
<dbReference type="RefSeq" id="WP_001029798.1">
    <property type="nucleotide sequence ID" value="NZ_JBDGFB010000027.1"/>
</dbReference>
<dbReference type="SMR" id="B0V8G6"/>
<dbReference type="EnsemblBacteria" id="CAM87791">
    <property type="protein sequence ID" value="CAM87791"/>
    <property type="gene ID" value="ABAYE2970"/>
</dbReference>
<dbReference type="GeneID" id="92892774"/>
<dbReference type="KEGG" id="aby:ABAYE2970"/>
<dbReference type="HOGENOM" id="CLU_108953_3_0_6"/>
<dbReference type="GO" id="GO:0005829">
    <property type="term" value="C:cytosol"/>
    <property type="evidence" value="ECO:0007669"/>
    <property type="project" value="TreeGrafter"/>
</dbReference>
<dbReference type="GO" id="GO:0003723">
    <property type="term" value="F:RNA binding"/>
    <property type="evidence" value="ECO:0007669"/>
    <property type="project" value="UniProtKB-UniRule"/>
</dbReference>
<dbReference type="GO" id="GO:0070929">
    <property type="term" value="P:trans-translation"/>
    <property type="evidence" value="ECO:0007669"/>
    <property type="project" value="UniProtKB-UniRule"/>
</dbReference>
<dbReference type="CDD" id="cd09294">
    <property type="entry name" value="SmpB"/>
    <property type="match status" value="1"/>
</dbReference>
<dbReference type="Gene3D" id="2.40.280.10">
    <property type="match status" value="1"/>
</dbReference>
<dbReference type="HAMAP" id="MF_00023">
    <property type="entry name" value="SmpB"/>
    <property type="match status" value="1"/>
</dbReference>
<dbReference type="InterPro" id="IPR023620">
    <property type="entry name" value="SmpB"/>
</dbReference>
<dbReference type="InterPro" id="IPR000037">
    <property type="entry name" value="SsrA-bd_prot"/>
</dbReference>
<dbReference type="InterPro" id="IPR020081">
    <property type="entry name" value="SsrA-bd_prot_CS"/>
</dbReference>
<dbReference type="NCBIfam" id="NF003843">
    <property type="entry name" value="PRK05422.1"/>
    <property type="match status" value="1"/>
</dbReference>
<dbReference type="NCBIfam" id="TIGR00086">
    <property type="entry name" value="smpB"/>
    <property type="match status" value="1"/>
</dbReference>
<dbReference type="PANTHER" id="PTHR30308:SF2">
    <property type="entry name" value="SSRA-BINDING PROTEIN"/>
    <property type="match status" value="1"/>
</dbReference>
<dbReference type="PANTHER" id="PTHR30308">
    <property type="entry name" value="TMRNA-BINDING COMPONENT OF TRANS-TRANSLATION TAGGING COMPLEX"/>
    <property type="match status" value="1"/>
</dbReference>
<dbReference type="Pfam" id="PF01668">
    <property type="entry name" value="SmpB"/>
    <property type="match status" value="1"/>
</dbReference>
<dbReference type="SUPFAM" id="SSF74982">
    <property type="entry name" value="Small protein B (SmpB)"/>
    <property type="match status" value="1"/>
</dbReference>
<dbReference type="PROSITE" id="PS01317">
    <property type="entry name" value="SSRP"/>
    <property type="match status" value="1"/>
</dbReference>
<organism>
    <name type="scientific">Acinetobacter baumannii (strain AYE)</name>
    <dbReference type="NCBI Taxonomy" id="509173"/>
    <lineage>
        <taxon>Bacteria</taxon>
        <taxon>Pseudomonadati</taxon>
        <taxon>Pseudomonadota</taxon>
        <taxon>Gammaproteobacteria</taxon>
        <taxon>Moraxellales</taxon>
        <taxon>Moraxellaceae</taxon>
        <taxon>Acinetobacter</taxon>
        <taxon>Acinetobacter calcoaceticus/baumannii complex</taxon>
    </lineage>
</organism>
<keyword id="KW-0963">Cytoplasm</keyword>
<keyword id="KW-0694">RNA-binding</keyword>
<evidence type="ECO:0000255" key="1">
    <source>
        <dbReference type="HAMAP-Rule" id="MF_00023"/>
    </source>
</evidence>
<sequence>MAKATVVKKHNGGTIAQNKRARHDYFIEEKFEAGMSLLGWEVKSLRAGRMSLTESYVIFKNGEAFLFGAQIQPLLSASTHIVPEATRTRKLLLSRRELEKLMGAVNQKGYSCVPLACYWKGHLVKLEIALVKGKQLHDKRATEKERDWQRDKARIFHK</sequence>
<feature type="chain" id="PRO_1000090131" description="SsrA-binding protein">
    <location>
        <begin position="1"/>
        <end position="158"/>
    </location>
</feature>
<name>SSRP_ACIBY</name>
<protein>
    <recommendedName>
        <fullName evidence="1">SsrA-binding protein</fullName>
    </recommendedName>
    <alternativeName>
        <fullName evidence="1">Small protein B</fullName>
    </alternativeName>
</protein>
<accession>B0V8G6</accession>
<gene>
    <name evidence="1" type="primary">smpB</name>
    <name type="ordered locus">ABAYE2970</name>
</gene>
<comment type="function">
    <text evidence="1">Required for rescue of stalled ribosomes mediated by trans-translation. Binds to transfer-messenger RNA (tmRNA), required for stable association of tmRNA with ribosomes. tmRNA and SmpB together mimic tRNA shape, replacing the anticodon stem-loop with SmpB. tmRNA is encoded by the ssrA gene; the 2 termini fold to resemble tRNA(Ala) and it encodes a 'tag peptide', a short internal open reading frame. During trans-translation Ala-aminoacylated tmRNA acts like a tRNA, entering the A-site of stalled ribosomes, displacing the stalled mRNA. The ribosome then switches to translate the ORF on the tmRNA; the nascent peptide is terminated with the 'tag peptide' encoded by the tmRNA and targeted for degradation. The ribosome is freed to recommence translation, which seems to be the essential function of trans-translation.</text>
</comment>
<comment type="subcellular location">
    <subcellularLocation>
        <location evidence="1">Cytoplasm</location>
    </subcellularLocation>
    <text evidence="1">The tmRNA-SmpB complex associates with stalled 70S ribosomes.</text>
</comment>
<comment type="similarity">
    <text evidence="1">Belongs to the SmpB family.</text>
</comment>
<reference key="1">
    <citation type="journal article" date="2008" name="PLoS ONE">
        <title>Comparative analysis of Acinetobacters: three genomes for three lifestyles.</title>
        <authorList>
            <person name="Vallenet D."/>
            <person name="Nordmann P."/>
            <person name="Barbe V."/>
            <person name="Poirel L."/>
            <person name="Mangenot S."/>
            <person name="Bataille E."/>
            <person name="Dossat C."/>
            <person name="Gas S."/>
            <person name="Kreimeyer A."/>
            <person name="Lenoble P."/>
            <person name="Oztas S."/>
            <person name="Poulain J."/>
            <person name="Segurens B."/>
            <person name="Robert C."/>
            <person name="Abergel C."/>
            <person name="Claverie J.-M."/>
            <person name="Raoult D."/>
            <person name="Medigue C."/>
            <person name="Weissenbach J."/>
            <person name="Cruveiller S."/>
        </authorList>
    </citation>
    <scope>NUCLEOTIDE SEQUENCE [LARGE SCALE GENOMIC DNA]</scope>
    <source>
        <strain>AYE</strain>
    </source>
</reference>
<proteinExistence type="inferred from homology"/>